<comment type="function">
    <text evidence="1">Zinc phosphodiesterase, which displays some tRNA 3'-processing endonuclease activity. Probably involved in tRNA maturation, by removing a 3'-trailer from precursor tRNA.</text>
</comment>
<comment type="catalytic activity">
    <reaction evidence="1">
        <text>Endonucleolytic cleavage of RNA, removing extra 3' nucleotides from tRNA precursor, generating 3' termini of tRNAs. A 3'-hydroxy group is left at the tRNA terminus and a 5'-phosphoryl group is left at the trailer molecule.</text>
        <dbReference type="EC" id="3.1.26.11"/>
    </reaction>
</comment>
<comment type="cofactor">
    <cofactor evidence="1">
        <name>Zn(2+)</name>
        <dbReference type="ChEBI" id="CHEBI:29105"/>
    </cofactor>
    <text evidence="1">Binds 2 Zn(2+) ions.</text>
</comment>
<comment type="subunit">
    <text evidence="1">Homodimer.</text>
</comment>
<comment type="similarity">
    <text evidence="1">Belongs to the RNase Z family.</text>
</comment>
<gene>
    <name evidence="1" type="primary">rnz</name>
    <name type="ordered locus">P9215_15781</name>
</gene>
<keyword id="KW-0255">Endonuclease</keyword>
<keyword id="KW-0378">Hydrolase</keyword>
<keyword id="KW-0479">Metal-binding</keyword>
<keyword id="KW-0540">Nuclease</keyword>
<keyword id="KW-0819">tRNA processing</keyword>
<keyword id="KW-0862">Zinc</keyword>
<dbReference type="EC" id="3.1.26.11" evidence="1"/>
<dbReference type="EMBL" id="CP000825">
    <property type="protein sequence ID" value="ABV51191.1"/>
    <property type="molecule type" value="Genomic_DNA"/>
</dbReference>
<dbReference type="RefSeq" id="WP_012008229.1">
    <property type="nucleotide sequence ID" value="NC_009840.1"/>
</dbReference>
<dbReference type="SMR" id="A8G6G0"/>
<dbReference type="STRING" id="93060.P9215_15781"/>
<dbReference type="KEGG" id="pmh:P9215_15781"/>
<dbReference type="eggNOG" id="COG1234">
    <property type="taxonomic scope" value="Bacteria"/>
</dbReference>
<dbReference type="HOGENOM" id="CLU_031317_2_0_3"/>
<dbReference type="OrthoDB" id="9800940at2"/>
<dbReference type="Proteomes" id="UP000002014">
    <property type="component" value="Chromosome"/>
</dbReference>
<dbReference type="GO" id="GO:0042781">
    <property type="term" value="F:3'-tRNA processing endoribonuclease activity"/>
    <property type="evidence" value="ECO:0007669"/>
    <property type="project" value="UniProtKB-UniRule"/>
</dbReference>
<dbReference type="GO" id="GO:0008270">
    <property type="term" value="F:zinc ion binding"/>
    <property type="evidence" value="ECO:0007669"/>
    <property type="project" value="UniProtKB-UniRule"/>
</dbReference>
<dbReference type="CDD" id="cd07717">
    <property type="entry name" value="RNaseZ_ZiPD-like_MBL-fold"/>
    <property type="match status" value="1"/>
</dbReference>
<dbReference type="FunFam" id="3.60.15.10:FF:000002">
    <property type="entry name" value="Ribonuclease Z"/>
    <property type="match status" value="1"/>
</dbReference>
<dbReference type="Gene3D" id="3.60.15.10">
    <property type="entry name" value="Ribonuclease Z/Hydroxyacylglutathione hydrolase-like"/>
    <property type="match status" value="1"/>
</dbReference>
<dbReference type="HAMAP" id="MF_01818">
    <property type="entry name" value="RNase_Z_BN"/>
    <property type="match status" value="1"/>
</dbReference>
<dbReference type="InterPro" id="IPR001279">
    <property type="entry name" value="Metallo-B-lactamas"/>
</dbReference>
<dbReference type="InterPro" id="IPR036866">
    <property type="entry name" value="RibonucZ/Hydroxyglut_hydro"/>
</dbReference>
<dbReference type="InterPro" id="IPR013471">
    <property type="entry name" value="RNase_Z/BN"/>
</dbReference>
<dbReference type="NCBIfam" id="NF000801">
    <property type="entry name" value="PRK00055.1-3"/>
    <property type="match status" value="1"/>
</dbReference>
<dbReference type="NCBIfam" id="TIGR02651">
    <property type="entry name" value="RNase_Z"/>
    <property type="match status" value="1"/>
</dbReference>
<dbReference type="PANTHER" id="PTHR46018">
    <property type="entry name" value="ZINC PHOSPHODIESTERASE ELAC PROTEIN 1"/>
    <property type="match status" value="1"/>
</dbReference>
<dbReference type="PANTHER" id="PTHR46018:SF2">
    <property type="entry name" value="ZINC PHOSPHODIESTERASE ELAC PROTEIN 1"/>
    <property type="match status" value="1"/>
</dbReference>
<dbReference type="Pfam" id="PF12706">
    <property type="entry name" value="Lactamase_B_2"/>
    <property type="match status" value="1"/>
</dbReference>
<dbReference type="SUPFAM" id="SSF56281">
    <property type="entry name" value="Metallo-hydrolase/oxidoreductase"/>
    <property type="match status" value="1"/>
</dbReference>
<reference key="1">
    <citation type="journal article" date="2007" name="PLoS Genet.">
        <title>Patterns and implications of gene gain and loss in the evolution of Prochlorococcus.</title>
        <authorList>
            <person name="Kettler G.C."/>
            <person name="Martiny A.C."/>
            <person name="Huang K."/>
            <person name="Zucker J."/>
            <person name="Coleman M.L."/>
            <person name="Rodrigue S."/>
            <person name="Chen F."/>
            <person name="Lapidus A."/>
            <person name="Ferriera S."/>
            <person name="Johnson J."/>
            <person name="Steglich C."/>
            <person name="Church G.M."/>
            <person name="Richardson P."/>
            <person name="Chisholm S.W."/>
        </authorList>
    </citation>
    <scope>NUCLEOTIDE SEQUENCE [LARGE SCALE GENOMIC DNA]</scope>
    <source>
        <strain>MIT 9215</strain>
    </source>
</reference>
<organism>
    <name type="scientific">Prochlorococcus marinus (strain MIT 9215)</name>
    <dbReference type="NCBI Taxonomy" id="93060"/>
    <lineage>
        <taxon>Bacteria</taxon>
        <taxon>Bacillati</taxon>
        <taxon>Cyanobacteriota</taxon>
        <taxon>Cyanophyceae</taxon>
        <taxon>Synechococcales</taxon>
        <taxon>Prochlorococcaceae</taxon>
        <taxon>Prochlorococcus</taxon>
    </lineage>
</organism>
<evidence type="ECO:0000255" key="1">
    <source>
        <dbReference type="HAMAP-Rule" id="MF_01818"/>
    </source>
</evidence>
<accession>A8G6G0</accession>
<protein>
    <recommendedName>
        <fullName evidence="1">Ribonuclease Z</fullName>
        <shortName evidence="1">RNase Z</shortName>
        <ecNumber evidence="1">3.1.26.11</ecNumber>
    </recommendedName>
    <alternativeName>
        <fullName evidence="1">tRNA 3 endonuclease</fullName>
    </alternativeName>
    <alternativeName>
        <fullName evidence="1">tRNase Z</fullName>
    </alternativeName>
</protein>
<proteinExistence type="inferred from homology"/>
<sequence>MNVTFLGTSSGVPSLTRNVSSLALKLSQSSEVWLFDCGEGTQHQIMKSNIKSSQIKKIFITHMHGDHIYGLPGLLATLGLSGNSKGIEIYGPSELRSYINSALKSSFCKLSYPLHFVEVENYASKNKILFENNKIKVNCACLKHKIPAYGYRVSEKDKPGIFDIKKAQSLKIAPGPIYSELQQGKKVVLADGRTFDGKEFCGPPRVGESFVYCTDTVFSQSAVSLSKNANLLVHESTFSEEDENMAYEKLHSTTIMAAKTALLSNTKKLIITHLSPRYTNKNAITPSDLLKEAQKVFPNTQLAKDFLTTEIK</sequence>
<name>RNZ_PROM2</name>
<feature type="chain" id="PRO_1000070315" description="Ribonuclease Z">
    <location>
        <begin position="1"/>
        <end position="312"/>
    </location>
</feature>
<feature type="active site" description="Proton acceptor" evidence="1">
    <location>
        <position position="66"/>
    </location>
</feature>
<feature type="binding site" evidence="1">
    <location>
        <position position="62"/>
    </location>
    <ligand>
        <name>Zn(2+)</name>
        <dbReference type="ChEBI" id="CHEBI:29105"/>
        <label>1</label>
        <note>catalytic</note>
    </ligand>
</feature>
<feature type="binding site" evidence="1">
    <location>
        <position position="64"/>
    </location>
    <ligand>
        <name>Zn(2+)</name>
        <dbReference type="ChEBI" id="CHEBI:29105"/>
        <label>1</label>
        <note>catalytic</note>
    </ligand>
</feature>
<feature type="binding site" evidence="1">
    <location>
        <position position="66"/>
    </location>
    <ligand>
        <name>Zn(2+)</name>
        <dbReference type="ChEBI" id="CHEBI:29105"/>
        <label>2</label>
        <note>catalytic</note>
    </ligand>
</feature>
<feature type="binding site" evidence="1">
    <location>
        <position position="67"/>
    </location>
    <ligand>
        <name>Zn(2+)</name>
        <dbReference type="ChEBI" id="CHEBI:29105"/>
        <label>2</label>
        <note>catalytic</note>
    </ligand>
</feature>
<feature type="binding site" evidence="1">
    <location>
        <position position="144"/>
    </location>
    <ligand>
        <name>Zn(2+)</name>
        <dbReference type="ChEBI" id="CHEBI:29105"/>
        <label>1</label>
        <note>catalytic</note>
    </ligand>
</feature>
<feature type="binding site" evidence="1">
    <location>
        <position position="215"/>
    </location>
    <ligand>
        <name>Zn(2+)</name>
        <dbReference type="ChEBI" id="CHEBI:29105"/>
        <label>1</label>
        <note>catalytic</note>
    </ligand>
</feature>
<feature type="binding site" evidence="1">
    <location>
        <position position="215"/>
    </location>
    <ligand>
        <name>Zn(2+)</name>
        <dbReference type="ChEBI" id="CHEBI:29105"/>
        <label>2</label>
        <note>catalytic</note>
    </ligand>
</feature>
<feature type="binding site" evidence="1">
    <location>
        <position position="273"/>
    </location>
    <ligand>
        <name>Zn(2+)</name>
        <dbReference type="ChEBI" id="CHEBI:29105"/>
        <label>2</label>
        <note>catalytic</note>
    </ligand>
</feature>